<dbReference type="EMBL" id="CP001013">
    <property type="protein sequence ID" value="ACB36188.1"/>
    <property type="molecule type" value="Genomic_DNA"/>
</dbReference>
<dbReference type="RefSeq" id="WP_012348933.1">
    <property type="nucleotide sequence ID" value="NC_010524.1"/>
</dbReference>
<dbReference type="SMR" id="B1Y8C2"/>
<dbReference type="STRING" id="395495.Lcho_3934"/>
<dbReference type="KEGG" id="lch:Lcho_3934"/>
<dbReference type="eggNOG" id="COG0097">
    <property type="taxonomic scope" value="Bacteria"/>
</dbReference>
<dbReference type="HOGENOM" id="CLU_065464_1_2_4"/>
<dbReference type="OrthoDB" id="9805007at2"/>
<dbReference type="Proteomes" id="UP000001693">
    <property type="component" value="Chromosome"/>
</dbReference>
<dbReference type="GO" id="GO:0022625">
    <property type="term" value="C:cytosolic large ribosomal subunit"/>
    <property type="evidence" value="ECO:0007669"/>
    <property type="project" value="TreeGrafter"/>
</dbReference>
<dbReference type="GO" id="GO:0019843">
    <property type="term" value="F:rRNA binding"/>
    <property type="evidence" value="ECO:0007669"/>
    <property type="project" value="UniProtKB-UniRule"/>
</dbReference>
<dbReference type="GO" id="GO:0003735">
    <property type="term" value="F:structural constituent of ribosome"/>
    <property type="evidence" value="ECO:0007669"/>
    <property type="project" value="InterPro"/>
</dbReference>
<dbReference type="GO" id="GO:0002181">
    <property type="term" value="P:cytoplasmic translation"/>
    <property type="evidence" value="ECO:0007669"/>
    <property type="project" value="TreeGrafter"/>
</dbReference>
<dbReference type="FunFam" id="3.90.930.12:FF:000001">
    <property type="entry name" value="50S ribosomal protein L6"/>
    <property type="match status" value="1"/>
</dbReference>
<dbReference type="FunFam" id="3.90.930.12:FF:000002">
    <property type="entry name" value="50S ribosomal protein L6"/>
    <property type="match status" value="1"/>
</dbReference>
<dbReference type="Gene3D" id="3.90.930.12">
    <property type="entry name" value="Ribosomal protein L6, alpha-beta domain"/>
    <property type="match status" value="2"/>
</dbReference>
<dbReference type="HAMAP" id="MF_01365_B">
    <property type="entry name" value="Ribosomal_uL6_B"/>
    <property type="match status" value="1"/>
</dbReference>
<dbReference type="InterPro" id="IPR000702">
    <property type="entry name" value="Ribosomal_uL6-like"/>
</dbReference>
<dbReference type="InterPro" id="IPR036789">
    <property type="entry name" value="Ribosomal_uL6-like_a/b-dom_sf"/>
</dbReference>
<dbReference type="InterPro" id="IPR020040">
    <property type="entry name" value="Ribosomal_uL6_a/b-dom"/>
</dbReference>
<dbReference type="InterPro" id="IPR019906">
    <property type="entry name" value="Ribosomal_uL6_bac-type"/>
</dbReference>
<dbReference type="InterPro" id="IPR002358">
    <property type="entry name" value="Ribosomal_uL6_CS"/>
</dbReference>
<dbReference type="NCBIfam" id="TIGR03654">
    <property type="entry name" value="L6_bact"/>
    <property type="match status" value="1"/>
</dbReference>
<dbReference type="PANTHER" id="PTHR11655">
    <property type="entry name" value="60S/50S RIBOSOMAL PROTEIN L6/L9"/>
    <property type="match status" value="1"/>
</dbReference>
<dbReference type="PANTHER" id="PTHR11655:SF14">
    <property type="entry name" value="LARGE RIBOSOMAL SUBUNIT PROTEIN UL6M"/>
    <property type="match status" value="1"/>
</dbReference>
<dbReference type="Pfam" id="PF00347">
    <property type="entry name" value="Ribosomal_L6"/>
    <property type="match status" value="2"/>
</dbReference>
<dbReference type="PIRSF" id="PIRSF002162">
    <property type="entry name" value="Ribosomal_L6"/>
    <property type="match status" value="1"/>
</dbReference>
<dbReference type="PRINTS" id="PR00059">
    <property type="entry name" value="RIBOSOMALL6"/>
</dbReference>
<dbReference type="SUPFAM" id="SSF56053">
    <property type="entry name" value="Ribosomal protein L6"/>
    <property type="match status" value="2"/>
</dbReference>
<dbReference type="PROSITE" id="PS00525">
    <property type="entry name" value="RIBOSOMAL_L6_1"/>
    <property type="match status" value="1"/>
</dbReference>
<proteinExistence type="inferred from homology"/>
<keyword id="KW-1185">Reference proteome</keyword>
<keyword id="KW-0687">Ribonucleoprotein</keyword>
<keyword id="KW-0689">Ribosomal protein</keyword>
<keyword id="KW-0694">RNA-binding</keyword>
<keyword id="KW-0699">rRNA-binding</keyword>
<accession>B1Y8C2</accession>
<reference key="1">
    <citation type="submission" date="2008-03" db="EMBL/GenBank/DDBJ databases">
        <title>Complete sequence of Leptothrix cholodnii SP-6.</title>
        <authorList>
            <consortium name="US DOE Joint Genome Institute"/>
            <person name="Copeland A."/>
            <person name="Lucas S."/>
            <person name="Lapidus A."/>
            <person name="Glavina del Rio T."/>
            <person name="Dalin E."/>
            <person name="Tice H."/>
            <person name="Bruce D."/>
            <person name="Goodwin L."/>
            <person name="Pitluck S."/>
            <person name="Chertkov O."/>
            <person name="Brettin T."/>
            <person name="Detter J.C."/>
            <person name="Han C."/>
            <person name="Kuske C.R."/>
            <person name="Schmutz J."/>
            <person name="Larimer F."/>
            <person name="Land M."/>
            <person name="Hauser L."/>
            <person name="Kyrpides N."/>
            <person name="Lykidis A."/>
            <person name="Emerson D."/>
            <person name="Richardson P."/>
        </authorList>
    </citation>
    <scope>NUCLEOTIDE SEQUENCE [LARGE SCALE GENOMIC DNA]</scope>
    <source>
        <strain>ATCC 51168 / LMG 8142 / SP-6</strain>
    </source>
</reference>
<comment type="function">
    <text evidence="1">This protein binds to the 23S rRNA, and is important in its secondary structure. It is located near the subunit interface in the base of the L7/L12 stalk, and near the tRNA binding site of the peptidyltransferase center.</text>
</comment>
<comment type="subunit">
    <text evidence="1">Part of the 50S ribosomal subunit.</text>
</comment>
<comment type="similarity">
    <text evidence="1">Belongs to the universal ribosomal protein uL6 family.</text>
</comment>
<name>RL6_LEPCP</name>
<sequence length="177" mass="19124">MSRVGKMLVAVPQGVDVSINEDLISVKGSLGTLLRPAHRLVKVQNEAGKLSFTPLDESAEANAMSGTMRALVANMVNGVSKGFQKKLSLVGVGYRAQAQGQKLNLQIGFSHPVVKEMPEGIKVECPTQTEILIKGADRQVVGQLAAEVRAFRPPEPYKGKGIRYSDEKVAIKETKKK</sequence>
<gene>
    <name evidence="1" type="primary">rplF</name>
    <name type="ordered locus">Lcho_3934</name>
</gene>
<organism>
    <name type="scientific">Leptothrix cholodnii (strain ATCC 51168 / LMG 8142 / SP-6)</name>
    <name type="common">Leptothrix discophora (strain SP-6)</name>
    <dbReference type="NCBI Taxonomy" id="395495"/>
    <lineage>
        <taxon>Bacteria</taxon>
        <taxon>Pseudomonadati</taxon>
        <taxon>Pseudomonadota</taxon>
        <taxon>Betaproteobacteria</taxon>
        <taxon>Burkholderiales</taxon>
        <taxon>Sphaerotilaceae</taxon>
        <taxon>Leptothrix</taxon>
    </lineage>
</organism>
<evidence type="ECO:0000255" key="1">
    <source>
        <dbReference type="HAMAP-Rule" id="MF_01365"/>
    </source>
</evidence>
<evidence type="ECO:0000305" key="2"/>
<feature type="chain" id="PRO_1000144010" description="Large ribosomal subunit protein uL6">
    <location>
        <begin position="1"/>
        <end position="177"/>
    </location>
</feature>
<protein>
    <recommendedName>
        <fullName evidence="1">Large ribosomal subunit protein uL6</fullName>
    </recommendedName>
    <alternativeName>
        <fullName evidence="2">50S ribosomal protein L6</fullName>
    </alternativeName>
</protein>